<accession>Q9QYU7</accession>
<accession>Q9WV49</accession>
<protein>
    <recommendedName>
        <fullName>Ribosome biogenesis protein NSA2 homolog</fullName>
    </recommendedName>
    <alternativeName>
        <fullName>Protein CDK105</fullName>
    </alternativeName>
    <alternativeName>
        <fullName>TGF-beta-inducible nuclear protein 1</fullName>
    </alternativeName>
</protein>
<comment type="function">
    <text evidence="1">Involved in the biogenesis of the 60S ribosomal subunit. May play a part in the quality control of pre-60S particles (By similarity).</text>
</comment>
<comment type="subunit">
    <text evidence="1">Component of the pre-66S ribosomal particle.</text>
</comment>
<comment type="subcellular location">
    <subcellularLocation>
        <location evidence="1">Nucleus</location>
        <location evidence="1">Nucleolus</location>
    </subcellularLocation>
</comment>
<comment type="similarity">
    <text evidence="5">Belongs to the eukaryotic ribosomal protein eS8 family. Ribosome biogenesis protein NSA2 subfamily.</text>
</comment>
<comment type="sequence caution" evidence="5">
    <conflict type="frameshift">
        <sequence resource="EMBL-CDS" id="CAB56622"/>
    </conflict>
</comment>
<name>NSA2_RAT</name>
<sequence>MPQNEYIELHRKRYGYRLDYHEKKRKKEGREAHERSKKAKKMIGLKAKLYHKQRHAEKIQMKKTIKMHEKRNTKQKDDEKTPQGAVPAYLLDREGQSRAKVLSNMIKQKRKEKAGKWESPLPKVRAQGETELLKVIRTGKRKKKAWRRMVTKVCFVGDGFTRKPPKYEKFIRPMGLRFKKAHVTHPELKATFCLPILGVKKNPSSPLYTTLGVITKGTVIEVNVSELGLVTQGGKVIWGKYAQVTNNPENDGCINAVLLV</sequence>
<reference key="1">
    <citation type="submission" date="1998-05" db="EMBL/GenBank/DDBJ databases">
        <authorList>
            <person name="Zaidi Q.J."/>
        </authorList>
    </citation>
    <scope>NUCLEOTIDE SEQUENCE [MRNA]</scope>
    <source>
        <strain>GK</strain>
    </source>
</reference>
<reference key="2">
    <citation type="journal article" date="2000" name="Carcinogenesis">
        <title>mRNA expression patterns in different stages of asbestos-induced carcinogenesis in rats.</title>
        <authorList>
            <person name="Sandhu H."/>
            <person name="Dehnen W."/>
            <person name="Roller M."/>
            <person name="Abel J."/>
            <person name="Unfried K."/>
        </authorList>
    </citation>
    <scope>NUCLEOTIDE SEQUENCE [MRNA] OF 1-104</scope>
    <source>
        <strain>Wistar</strain>
        <tissue>Peritoneal macrophage</tissue>
    </source>
</reference>
<evidence type="ECO:0000250" key="1"/>
<evidence type="ECO:0000250" key="2">
    <source>
        <dbReference type="UniProtKB" id="O95478"/>
    </source>
</evidence>
<evidence type="ECO:0000255" key="3">
    <source>
        <dbReference type="PROSITE-ProRule" id="PRU00768"/>
    </source>
</evidence>
<evidence type="ECO:0000256" key="4">
    <source>
        <dbReference type="SAM" id="MobiDB-lite"/>
    </source>
</evidence>
<evidence type="ECO:0000305" key="5"/>
<feature type="chain" id="PRO_0000122261" description="Ribosome biogenesis protein NSA2 homolog">
    <location>
        <begin position="1"/>
        <end position="260"/>
    </location>
</feature>
<feature type="region of interest" description="Disordered" evidence="4">
    <location>
        <begin position="20"/>
        <end position="42"/>
    </location>
</feature>
<feature type="short sequence motif" description="Nuclear localization signal" evidence="3">
    <location>
        <begin position="11"/>
        <end position="18"/>
    </location>
</feature>
<feature type="compositionally biased region" description="Basic and acidic residues" evidence="4">
    <location>
        <begin position="20"/>
        <end position="34"/>
    </location>
</feature>
<feature type="modified residue" description="Phosphothreonine" evidence="2">
    <location>
        <position position="81"/>
    </location>
</feature>
<feature type="cross-link" description="Glycyl lysine isopeptide (Lys-Gly) (interchain with G-Cter in SUMO2)" evidence="2">
    <location>
        <position position="80"/>
    </location>
</feature>
<feature type="sequence conflict" description="In Ref. 2; AAD44977." evidence="5" ref="2">
    <original>LSN</original>
    <variation>PPS</variation>
    <location>
        <begin position="102"/>
        <end position="104"/>
    </location>
</feature>
<organism>
    <name type="scientific">Rattus norvegicus</name>
    <name type="common">Rat</name>
    <dbReference type="NCBI Taxonomy" id="10116"/>
    <lineage>
        <taxon>Eukaryota</taxon>
        <taxon>Metazoa</taxon>
        <taxon>Chordata</taxon>
        <taxon>Craniata</taxon>
        <taxon>Vertebrata</taxon>
        <taxon>Euteleostomi</taxon>
        <taxon>Mammalia</taxon>
        <taxon>Eutheria</taxon>
        <taxon>Euarchontoglires</taxon>
        <taxon>Glires</taxon>
        <taxon>Rodentia</taxon>
        <taxon>Myomorpha</taxon>
        <taxon>Muroidea</taxon>
        <taxon>Muridae</taxon>
        <taxon>Murinae</taxon>
        <taxon>Rattus</taxon>
    </lineage>
</organism>
<gene>
    <name type="primary">Nsa2</name>
    <name type="synonym">Cdk105</name>
    <name type="synonym">Tinp1</name>
</gene>
<dbReference type="EMBL" id="Y17325">
    <property type="protein sequence ID" value="CAB56622.1"/>
    <property type="status" value="ALT_FRAME"/>
    <property type="molecule type" value="mRNA"/>
</dbReference>
<dbReference type="EMBL" id="AF158379">
    <property type="protein sequence ID" value="AAD44977.1"/>
    <property type="molecule type" value="mRNA"/>
</dbReference>
<dbReference type="SMR" id="Q9QYU7"/>
<dbReference type="FunCoup" id="Q9QYU7">
    <property type="interactions" value="3249"/>
</dbReference>
<dbReference type="STRING" id="10116.ENSRNOP00000022138"/>
<dbReference type="PhosphoSitePlus" id="Q9QYU7"/>
<dbReference type="PaxDb" id="10116-ENSRNOP00000022138"/>
<dbReference type="UCSC" id="RGD:621335">
    <property type="organism name" value="rat"/>
</dbReference>
<dbReference type="AGR" id="RGD:621335"/>
<dbReference type="RGD" id="621335">
    <property type="gene designation" value="Nsa2"/>
</dbReference>
<dbReference type="eggNOG" id="KOG3163">
    <property type="taxonomic scope" value="Eukaryota"/>
</dbReference>
<dbReference type="InParanoid" id="Q9QYU7"/>
<dbReference type="PhylomeDB" id="Q9QYU7"/>
<dbReference type="PRO" id="PR:Q9QYU7"/>
<dbReference type="Proteomes" id="UP000002494">
    <property type="component" value="Unplaced"/>
</dbReference>
<dbReference type="GO" id="GO:0005730">
    <property type="term" value="C:nucleolus"/>
    <property type="evidence" value="ECO:0007669"/>
    <property type="project" value="UniProtKB-SubCell"/>
</dbReference>
<dbReference type="GO" id="GO:0030687">
    <property type="term" value="C:preribosome, large subunit precursor"/>
    <property type="evidence" value="ECO:0000318"/>
    <property type="project" value="GO_Central"/>
</dbReference>
<dbReference type="GO" id="GO:0000460">
    <property type="term" value="P:maturation of 5.8S rRNA"/>
    <property type="evidence" value="ECO:0000318"/>
    <property type="project" value="GO_Central"/>
</dbReference>
<dbReference type="GO" id="GO:0000470">
    <property type="term" value="P:maturation of LSU-rRNA"/>
    <property type="evidence" value="ECO:0000318"/>
    <property type="project" value="GO_Central"/>
</dbReference>
<dbReference type="CDD" id="cd11381">
    <property type="entry name" value="NSA2"/>
    <property type="match status" value="1"/>
</dbReference>
<dbReference type="FunFam" id="2.40.10.310:FF:000001">
    <property type="entry name" value="NSA2, ribosome biogenesis homolog"/>
    <property type="match status" value="1"/>
</dbReference>
<dbReference type="Gene3D" id="2.40.10.310">
    <property type="match status" value="1"/>
</dbReference>
<dbReference type="InterPro" id="IPR039411">
    <property type="entry name" value="NSA2_fam"/>
</dbReference>
<dbReference type="InterPro" id="IPR022309">
    <property type="entry name" value="Ribosomal_Se8/biogenesis_NSA2"/>
</dbReference>
<dbReference type="PANTHER" id="PTHR12642">
    <property type="entry name" value="RIBOSOME BIOGENESIS PROTEIN NSA2 HOMOLOG"/>
    <property type="match status" value="1"/>
</dbReference>
<dbReference type="Pfam" id="PF01201">
    <property type="entry name" value="Ribosomal_S8e"/>
    <property type="match status" value="1"/>
</dbReference>
<keyword id="KW-1017">Isopeptide bond</keyword>
<keyword id="KW-0539">Nucleus</keyword>
<keyword id="KW-0597">Phosphoprotein</keyword>
<keyword id="KW-1185">Reference proteome</keyword>
<keyword id="KW-0687">Ribonucleoprotein</keyword>
<keyword id="KW-0690">Ribosome biogenesis</keyword>
<keyword id="KW-0698">rRNA processing</keyword>
<keyword id="KW-0832">Ubl conjugation</keyword>
<proteinExistence type="evidence at transcript level"/>